<organism>
    <name type="scientific">Xenopus laevis</name>
    <name type="common">African clawed frog</name>
    <dbReference type="NCBI Taxonomy" id="8355"/>
    <lineage>
        <taxon>Eukaryota</taxon>
        <taxon>Metazoa</taxon>
        <taxon>Chordata</taxon>
        <taxon>Craniata</taxon>
        <taxon>Vertebrata</taxon>
        <taxon>Euteleostomi</taxon>
        <taxon>Amphibia</taxon>
        <taxon>Batrachia</taxon>
        <taxon>Anura</taxon>
        <taxon>Pipoidea</taxon>
        <taxon>Pipidae</taxon>
        <taxon>Xenopodinae</taxon>
        <taxon>Xenopus</taxon>
        <taxon>Xenopus</taxon>
    </lineage>
</organism>
<feature type="chain" id="PRO_0000299505" description="WD repeat and coiled-coil-containing protein">
    <location>
        <begin position="1"/>
        <end position="726"/>
    </location>
</feature>
<feature type="repeat" description="WD 1">
    <location>
        <begin position="55"/>
        <end position="98"/>
    </location>
</feature>
<feature type="repeat" description="WD 2">
    <location>
        <begin position="154"/>
        <end position="194"/>
    </location>
</feature>
<feature type="region of interest" description="Disordered" evidence="2">
    <location>
        <begin position="502"/>
        <end position="574"/>
    </location>
</feature>
<feature type="coiled-coil region" evidence="1">
    <location>
        <begin position="581"/>
        <end position="609"/>
    </location>
</feature>
<feature type="compositionally biased region" description="Polar residues" evidence="2">
    <location>
        <begin position="506"/>
        <end position="515"/>
    </location>
</feature>
<feature type="compositionally biased region" description="Basic and acidic residues" evidence="2">
    <location>
        <begin position="517"/>
        <end position="533"/>
    </location>
</feature>
<feature type="compositionally biased region" description="Polar residues" evidence="2">
    <location>
        <begin position="550"/>
        <end position="574"/>
    </location>
</feature>
<evidence type="ECO:0000255" key="1"/>
<evidence type="ECO:0000256" key="2">
    <source>
        <dbReference type="SAM" id="MobiDB-lite"/>
    </source>
</evidence>
<evidence type="ECO:0000305" key="3"/>
<protein>
    <recommendedName>
        <fullName evidence="3">WD repeat and coiled-coil-containing protein</fullName>
    </recommendedName>
</protein>
<dbReference type="EMBL" id="BC077564">
    <property type="protein sequence ID" value="AAH77564.1"/>
    <property type="molecule type" value="mRNA"/>
</dbReference>
<dbReference type="RefSeq" id="NP_001090236.1">
    <property type="nucleotide sequence ID" value="NM_001096767.1"/>
</dbReference>
<dbReference type="BioGRID" id="607846">
    <property type="interactions" value="1"/>
</dbReference>
<dbReference type="DNASU" id="779139"/>
<dbReference type="GeneID" id="779139"/>
<dbReference type="KEGG" id="xla:779139"/>
<dbReference type="AGR" id="Xenbase:XB-GENE-5729834"/>
<dbReference type="CTD" id="779139"/>
<dbReference type="Xenbase" id="XB-GENE-5729834">
    <property type="gene designation" value="wdcp.L"/>
</dbReference>
<dbReference type="OrthoDB" id="6409262at2759"/>
<dbReference type="Proteomes" id="UP000186698">
    <property type="component" value="Chromosome 5L"/>
</dbReference>
<dbReference type="Bgee" id="779139">
    <property type="expression patterns" value="Expressed in testis and 19 other cell types or tissues"/>
</dbReference>
<dbReference type="GO" id="GO:0019900">
    <property type="term" value="F:kinase binding"/>
    <property type="evidence" value="ECO:0000318"/>
    <property type="project" value="GO_Central"/>
</dbReference>
<dbReference type="InterPro" id="IPR028041">
    <property type="entry name" value="WDCP"/>
</dbReference>
<dbReference type="PANTHER" id="PTHR14897">
    <property type="entry name" value="WD REPEAT AND COILED-COIL-CONTAINING PROTEIN"/>
    <property type="match status" value="1"/>
</dbReference>
<dbReference type="PANTHER" id="PTHR14897:SF12">
    <property type="entry name" value="WD REPEAT AND COILED-COIL-CONTAINING PROTEIN"/>
    <property type="match status" value="1"/>
</dbReference>
<dbReference type="Pfam" id="PF15390">
    <property type="entry name" value="WDCP"/>
    <property type="match status" value="1"/>
</dbReference>
<dbReference type="SUPFAM" id="SSF69322">
    <property type="entry name" value="Tricorn protease domain 2"/>
    <property type="match status" value="1"/>
</dbReference>
<sequence length="726" mass="79727">MELGKGKLLRSGINALYQAIHPVHGLAWTDGRQVVLTALHLNNEEPKFGNSIVIGQFEHVHGLYWGPFLANDTPALLAVQHKKHVTVWQLCYSPSDKNKLVVSQTCEIGDPFPVLPQGCTWHPSKDILVVLTKRDVSVLYAVRYENSSLKADIKSSGLIHCACWTKDGSRLVVAIGSALHSYIWDSKQKTLNACAFCPVFDIGGYICAIESTVDSQVAVSTELPLDRICALNAGIAFTMPASSEITISNQPGLLLMEEEFSMDGVQKSADSGSLTTDSLATSPATLDLTHIVNHSKADLNSLLNLKKKDYLTGSGQDSSHLILVSFEKKVTTTRRVSIPGILVPDILAFDPTAHIVAVASNTCSAVLVYSLTSSSVPNIQQIQLEKNERPKGLCFLTDKMLLVLVGRQKTSDPAFLPSSSSDKYLIRLMVKEVMFDEDSSASSGGNTSVQASNDSCMSIQDKKKMVESLYKESPSTHRELLLPSGTAPPTYLRKKKLIEEIRSYDGDQSPTSSANEFDEKRNRLRMESFDTEPKNCSVTLSLDMDKKPISGSTSPKSECQNSSPPNFIQPSDVSPQQEILSISRNVERLCCNFAHLQQHLSELTDITRNGKRPLSASYLPCRQAPYVTVVCQDAYHPEGPAMKRSILLCENKLRLGTVQELFGLSLIEMQLGPSLWIILTGDSEGFIPLTFLANQEITIRDARIAAMHPPLRMDRNNSMQPSSSVT</sequence>
<accession>Q6DDJ5</accession>
<gene>
    <name type="primary">wdcp</name>
</gene>
<keyword id="KW-0175">Coiled coil</keyword>
<keyword id="KW-1185">Reference proteome</keyword>
<keyword id="KW-0677">Repeat</keyword>
<keyword id="KW-0853">WD repeat</keyword>
<proteinExistence type="evidence at transcript level"/>
<reference key="1">
    <citation type="submission" date="2004-07" db="EMBL/GenBank/DDBJ databases">
        <authorList>
            <consortium name="NIH - Xenopus Gene Collection (XGC) project"/>
        </authorList>
    </citation>
    <scope>NUCLEOTIDE SEQUENCE [LARGE SCALE MRNA]</scope>
    <source>
        <tissue>Oocyte</tissue>
    </source>
</reference>
<name>WDCP_XENLA</name>